<feature type="chain" id="PRO_0000350195" description="Dual-specificity RNA methyltransferase RlmN">
    <location>
        <begin position="1"/>
        <end position="360"/>
    </location>
</feature>
<feature type="domain" description="Radical SAM core" evidence="2">
    <location>
        <begin position="99"/>
        <end position="326"/>
    </location>
</feature>
<feature type="active site" description="Proton acceptor" evidence="1">
    <location>
        <position position="93"/>
    </location>
</feature>
<feature type="active site" description="S-methylcysteine intermediate" evidence="1">
    <location>
        <position position="331"/>
    </location>
</feature>
<feature type="binding site" evidence="1">
    <location>
        <position position="113"/>
    </location>
    <ligand>
        <name>[4Fe-4S] cluster</name>
        <dbReference type="ChEBI" id="CHEBI:49883"/>
        <note>4Fe-4S-S-AdoMet</note>
    </ligand>
</feature>
<feature type="binding site" evidence="1">
    <location>
        <position position="117"/>
    </location>
    <ligand>
        <name>[4Fe-4S] cluster</name>
        <dbReference type="ChEBI" id="CHEBI:49883"/>
        <note>4Fe-4S-S-AdoMet</note>
    </ligand>
</feature>
<feature type="binding site" evidence="1">
    <location>
        <position position="120"/>
    </location>
    <ligand>
        <name>[4Fe-4S] cluster</name>
        <dbReference type="ChEBI" id="CHEBI:49883"/>
        <note>4Fe-4S-S-AdoMet</note>
    </ligand>
</feature>
<feature type="binding site" evidence="1">
    <location>
        <begin position="158"/>
        <end position="159"/>
    </location>
    <ligand>
        <name>S-adenosyl-L-methionine</name>
        <dbReference type="ChEBI" id="CHEBI:59789"/>
    </ligand>
</feature>
<feature type="binding site" evidence="1">
    <location>
        <position position="190"/>
    </location>
    <ligand>
        <name>S-adenosyl-L-methionine</name>
        <dbReference type="ChEBI" id="CHEBI:59789"/>
    </ligand>
</feature>
<feature type="binding site" evidence="1">
    <location>
        <begin position="212"/>
        <end position="214"/>
    </location>
    <ligand>
        <name>S-adenosyl-L-methionine</name>
        <dbReference type="ChEBI" id="CHEBI:59789"/>
    </ligand>
</feature>
<feature type="binding site" evidence="1">
    <location>
        <position position="288"/>
    </location>
    <ligand>
        <name>S-adenosyl-L-methionine</name>
        <dbReference type="ChEBI" id="CHEBI:59789"/>
    </ligand>
</feature>
<feature type="disulfide bond" description="(transient)" evidence="1">
    <location>
        <begin position="106"/>
        <end position="331"/>
    </location>
</feature>
<protein>
    <recommendedName>
        <fullName evidence="1">Dual-specificity RNA methyltransferase RlmN</fullName>
        <ecNumber evidence="1">2.1.1.192</ecNumber>
    </recommendedName>
    <alternativeName>
        <fullName evidence="1">23S rRNA (adenine(2503)-C(2))-methyltransferase</fullName>
    </alternativeName>
    <alternativeName>
        <fullName evidence="1">23S rRNA m2A2503 methyltransferase</fullName>
    </alternativeName>
    <alternativeName>
        <fullName evidence="1">Ribosomal RNA large subunit methyltransferase N</fullName>
    </alternativeName>
    <alternativeName>
        <fullName evidence="1">tRNA (adenine(37)-C(2))-methyltransferase</fullName>
    </alternativeName>
    <alternativeName>
        <fullName evidence="1">tRNA m2A37 methyltransferase</fullName>
    </alternativeName>
</protein>
<dbReference type="EC" id="2.1.1.192" evidence="1"/>
<dbReference type="EMBL" id="AE017180">
    <property type="protein sequence ID" value="AAR34437.1"/>
    <property type="molecule type" value="Genomic_DNA"/>
</dbReference>
<dbReference type="RefSeq" id="NP_952164.1">
    <property type="nucleotide sequence ID" value="NC_002939.5"/>
</dbReference>
<dbReference type="RefSeq" id="WP_010941772.1">
    <property type="nucleotide sequence ID" value="NC_002939.5"/>
</dbReference>
<dbReference type="SMR" id="Q74E53"/>
<dbReference type="FunCoup" id="Q74E53">
    <property type="interactions" value="575"/>
</dbReference>
<dbReference type="STRING" id="243231.GSU1111"/>
<dbReference type="EnsemblBacteria" id="AAR34437">
    <property type="protein sequence ID" value="AAR34437"/>
    <property type="gene ID" value="GSU1111"/>
</dbReference>
<dbReference type="KEGG" id="gsu:GSU1111"/>
<dbReference type="PATRIC" id="fig|243231.5.peg.1107"/>
<dbReference type="eggNOG" id="COG0820">
    <property type="taxonomic scope" value="Bacteria"/>
</dbReference>
<dbReference type="HOGENOM" id="CLU_029101_0_0_7"/>
<dbReference type="InParanoid" id="Q74E53"/>
<dbReference type="OrthoDB" id="9793973at2"/>
<dbReference type="Proteomes" id="UP000000577">
    <property type="component" value="Chromosome"/>
</dbReference>
<dbReference type="GO" id="GO:0005737">
    <property type="term" value="C:cytoplasm"/>
    <property type="evidence" value="ECO:0007669"/>
    <property type="project" value="UniProtKB-SubCell"/>
</dbReference>
<dbReference type="GO" id="GO:0051539">
    <property type="term" value="F:4 iron, 4 sulfur cluster binding"/>
    <property type="evidence" value="ECO:0007669"/>
    <property type="project" value="UniProtKB-UniRule"/>
</dbReference>
<dbReference type="GO" id="GO:0046872">
    <property type="term" value="F:metal ion binding"/>
    <property type="evidence" value="ECO:0007669"/>
    <property type="project" value="UniProtKB-KW"/>
</dbReference>
<dbReference type="GO" id="GO:0070040">
    <property type="term" value="F:rRNA (adenine(2503)-C2-)-methyltransferase activity"/>
    <property type="evidence" value="ECO:0007669"/>
    <property type="project" value="UniProtKB-UniRule"/>
</dbReference>
<dbReference type="GO" id="GO:0019843">
    <property type="term" value="F:rRNA binding"/>
    <property type="evidence" value="ECO:0007669"/>
    <property type="project" value="UniProtKB-UniRule"/>
</dbReference>
<dbReference type="GO" id="GO:0002935">
    <property type="term" value="F:tRNA (adenine(37)-C2)-methyltransferase activity"/>
    <property type="evidence" value="ECO:0007669"/>
    <property type="project" value="UniProtKB-UniRule"/>
</dbReference>
<dbReference type="GO" id="GO:0000049">
    <property type="term" value="F:tRNA binding"/>
    <property type="evidence" value="ECO:0007669"/>
    <property type="project" value="UniProtKB-UniRule"/>
</dbReference>
<dbReference type="GO" id="GO:0070475">
    <property type="term" value="P:rRNA base methylation"/>
    <property type="evidence" value="ECO:0000318"/>
    <property type="project" value="GO_Central"/>
</dbReference>
<dbReference type="GO" id="GO:0030488">
    <property type="term" value="P:tRNA methylation"/>
    <property type="evidence" value="ECO:0000318"/>
    <property type="project" value="GO_Central"/>
</dbReference>
<dbReference type="CDD" id="cd01335">
    <property type="entry name" value="Radical_SAM"/>
    <property type="match status" value="1"/>
</dbReference>
<dbReference type="FunFam" id="1.10.150.530:FF:000003">
    <property type="entry name" value="Dual-specificity RNA methyltransferase RlmN"/>
    <property type="match status" value="1"/>
</dbReference>
<dbReference type="FunFam" id="3.20.20.70:FF:000161">
    <property type="entry name" value="Dual-specificity RNA methyltransferase RlmN"/>
    <property type="match status" value="1"/>
</dbReference>
<dbReference type="Gene3D" id="1.10.150.530">
    <property type="match status" value="1"/>
</dbReference>
<dbReference type="Gene3D" id="3.20.20.70">
    <property type="entry name" value="Aldolase class I"/>
    <property type="match status" value="1"/>
</dbReference>
<dbReference type="HAMAP" id="MF_01849">
    <property type="entry name" value="RNA_methyltr_RlmN"/>
    <property type="match status" value="1"/>
</dbReference>
<dbReference type="InterPro" id="IPR013785">
    <property type="entry name" value="Aldolase_TIM"/>
</dbReference>
<dbReference type="InterPro" id="IPR040072">
    <property type="entry name" value="Methyltransferase_A"/>
</dbReference>
<dbReference type="InterPro" id="IPR048641">
    <property type="entry name" value="RlmN_N"/>
</dbReference>
<dbReference type="InterPro" id="IPR027492">
    <property type="entry name" value="RNA_MTrfase_RlmN"/>
</dbReference>
<dbReference type="InterPro" id="IPR004383">
    <property type="entry name" value="rRNA_lsu_MTrfase_RlmN/Cfr"/>
</dbReference>
<dbReference type="InterPro" id="IPR007197">
    <property type="entry name" value="rSAM"/>
</dbReference>
<dbReference type="NCBIfam" id="TIGR00048">
    <property type="entry name" value="rRNA_mod_RlmN"/>
    <property type="match status" value="1"/>
</dbReference>
<dbReference type="PANTHER" id="PTHR30544">
    <property type="entry name" value="23S RRNA METHYLTRANSFERASE"/>
    <property type="match status" value="1"/>
</dbReference>
<dbReference type="PANTHER" id="PTHR30544:SF5">
    <property type="entry name" value="RADICAL SAM CORE DOMAIN-CONTAINING PROTEIN"/>
    <property type="match status" value="1"/>
</dbReference>
<dbReference type="Pfam" id="PF04055">
    <property type="entry name" value="Radical_SAM"/>
    <property type="match status" value="1"/>
</dbReference>
<dbReference type="Pfam" id="PF21016">
    <property type="entry name" value="RlmN_N"/>
    <property type="match status" value="1"/>
</dbReference>
<dbReference type="PIRSF" id="PIRSF006004">
    <property type="entry name" value="CHP00048"/>
    <property type="match status" value="1"/>
</dbReference>
<dbReference type="SFLD" id="SFLDF00275">
    <property type="entry name" value="adenosine_C2_methyltransferase"/>
    <property type="match status" value="1"/>
</dbReference>
<dbReference type="SFLD" id="SFLDS00029">
    <property type="entry name" value="Radical_SAM"/>
    <property type="match status" value="1"/>
</dbReference>
<dbReference type="SUPFAM" id="SSF102114">
    <property type="entry name" value="Radical SAM enzymes"/>
    <property type="match status" value="1"/>
</dbReference>
<dbReference type="PROSITE" id="PS51918">
    <property type="entry name" value="RADICAL_SAM"/>
    <property type="match status" value="1"/>
</dbReference>
<proteinExistence type="inferred from homology"/>
<comment type="function">
    <text evidence="1">Specifically methylates position 2 of adenine 2503 in 23S rRNA and position 2 of adenine 37 in tRNAs. m2A2503 modification seems to play a crucial role in the proofreading step occurring at the peptidyl transferase center and thus would serve to optimize ribosomal fidelity.</text>
</comment>
<comment type="catalytic activity">
    <reaction evidence="1">
        <text>adenosine(2503) in 23S rRNA + 2 reduced [2Fe-2S]-[ferredoxin] + 2 S-adenosyl-L-methionine = 2-methyladenosine(2503) in 23S rRNA + 5'-deoxyadenosine + L-methionine + 2 oxidized [2Fe-2S]-[ferredoxin] + S-adenosyl-L-homocysteine</text>
        <dbReference type="Rhea" id="RHEA:42916"/>
        <dbReference type="Rhea" id="RHEA-COMP:10000"/>
        <dbReference type="Rhea" id="RHEA-COMP:10001"/>
        <dbReference type="Rhea" id="RHEA-COMP:10152"/>
        <dbReference type="Rhea" id="RHEA-COMP:10282"/>
        <dbReference type="ChEBI" id="CHEBI:17319"/>
        <dbReference type="ChEBI" id="CHEBI:33737"/>
        <dbReference type="ChEBI" id="CHEBI:33738"/>
        <dbReference type="ChEBI" id="CHEBI:57844"/>
        <dbReference type="ChEBI" id="CHEBI:57856"/>
        <dbReference type="ChEBI" id="CHEBI:59789"/>
        <dbReference type="ChEBI" id="CHEBI:74411"/>
        <dbReference type="ChEBI" id="CHEBI:74497"/>
        <dbReference type="EC" id="2.1.1.192"/>
    </reaction>
</comment>
<comment type="catalytic activity">
    <reaction evidence="1">
        <text>adenosine(37) in tRNA + 2 reduced [2Fe-2S]-[ferredoxin] + 2 S-adenosyl-L-methionine = 2-methyladenosine(37) in tRNA + 5'-deoxyadenosine + L-methionine + 2 oxidized [2Fe-2S]-[ferredoxin] + S-adenosyl-L-homocysteine</text>
        <dbReference type="Rhea" id="RHEA:43332"/>
        <dbReference type="Rhea" id="RHEA-COMP:10000"/>
        <dbReference type="Rhea" id="RHEA-COMP:10001"/>
        <dbReference type="Rhea" id="RHEA-COMP:10162"/>
        <dbReference type="Rhea" id="RHEA-COMP:10485"/>
        <dbReference type="ChEBI" id="CHEBI:17319"/>
        <dbReference type="ChEBI" id="CHEBI:33737"/>
        <dbReference type="ChEBI" id="CHEBI:33738"/>
        <dbReference type="ChEBI" id="CHEBI:57844"/>
        <dbReference type="ChEBI" id="CHEBI:57856"/>
        <dbReference type="ChEBI" id="CHEBI:59789"/>
        <dbReference type="ChEBI" id="CHEBI:74411"/>
        <dbReference type="ChEBI" id="CHEBI:74497"/>
        <dbReference type="EC" id="2.1.1.192"/>
    </reaction>
</comment>
<comment type="cofactor">
    <cofactor evidence="1">
        <name>[4Fe-4S] cluster</name>
        <dbReference type="ChEBI" id="CHEBI:49883"/>
    </cofactor>
    <text evidence="1">Binds 1 [4Fe-4S] cluster. The cluster is coordinated with 3 cysteines and an exchangeable S-adenosyl-L-methionine.</text>
</comment>
<comment type="subcellular location">
    <subcellularLocation>
        <location evidence="1">Cytoplasm</location>
    </subcellularLocation>
</comment>
<comment type="miscellaneous">
    <text evidence="1">Reaction proceeds by a ping-pong mechanism involving intermediate methylation of a conserved cysteine residue.</text>
</comment>
<comment type="similarity">
    <text evidence="1">Belongs to the radical SAM superfamily. RlmN family.</text>
</comment>
<keyword id="KW-0004">4Fe-4S</keyword>
<keyword id="KW-0963">Cytoplasm</keyword>
<keyword id="KW-1015">Disulfide bond</keyword>
<keyword id="KW-0408">Iron</keyword>
<keyword id="KW-0411">Iron-sulfur</keyword>
<keyword id="KW-0479">Metal-binding</keyword>
<keyword id="KW-0489">Methyltransferase</keyword>
<keyword id="KW-1185">Reference proteome</keyword>
<keyword id="KW-0698">rRNA processing</keyword>
<keyword id="KW-0949">S-adenosyl-L-methionine</keyword>
<keyword id="KW-0808">Transferase</keyword>
<keyword id="KW-0819">tRNA processing</keyword>
<name>RLMN_GEOSL</name>
<evidence type="ECO:0000255" key="1">
    <source>
        <dbReference type="HAMAP-Rule" id="MF_01849"/>
    </source>
</evidence>
<evidence type="ECO:0000255" key="2">
    <source>
        <dbReference type="PROSITE-ProRule" id="PRU01266"/>
    </source>
</evidence>
<sequence>MDTMIDIKGLSIDELERFLLGKGKERYRARQIFKWLYQRGATSFAEMTDLAKELRRDLEETARISTLSPEALEISRDGTRKYLFRLDDGCSVESVLIPEEDRNTLCISSQVGCAMACEFCLTGTFRLTRNLTTAEIVNQVCAVQRDVPVRNIVFMGMGEPLANLDNVIRALQIMLHDDGLQFSTRRITVSTAGLVPEMERLGRSVTVNLAVSLNATTDELRDRIMPINRKYPLAVLLDACRRFPLPGRRKITIEYVLLGGVNDTLDDAKRLVRLLSDIPSKINLIPFNEHEGCSFRSPSQDAIDRFHRYLLDKHFTVITRSSRGADISAACGQLKGKLDALKPSGAGKQIEVSDSTNEVT</sequence>
<accession>Q74E53</accession>
<reference key="1">
    <citation type="journal article" date="2003" name="Science">
        <title>Genome of Geobacter sulfurreducens: metal reduction in subsurface environments.</title>
        <authorList>
            <person name="Methe B.A."/>
            <person name="Nelson K.E."/>
            <person name="Eisen J.A."/>
            <person name="Paulsen I.T."/>
            <person name="Nelson W.C."/>
            <person name="Heidelberg J.F."/>
            <person name="Wu D."/>
            <person name="Wu M."/>
            <person name="Ward N.L."/>
            <person name="Beanan M.J."/>
            <person name="Dodson R.J."/>
            <person name="Madupu R."/>
            <person name="Brinkac L.M."/>
            <person name="Daugherty S.C."/>
            <person name="DeBoy R.T."/>
            <person name="Durkin A.S."/>
            <person name="Gwinn M.L."/>
            <person name="Kolonay J.F."/>
            <person name="Sullivan S.A."/>
            <person name="Haft D.H."/>
            <person name="Selengut J."/>
            <person name="Davidsen T.M."/>
            <person name="Zafar N."/>
            <person name="White O."/>
            <person name="Tran B."/>
            <person name="Romero C."/>
            <person name="Forberger H.A."/>
            <person name="Weidman J.F."/>
            <person name="Khouri H.M."/>
            <person name="Feldblyum T.V."/>
            <person name="Utterback T.R."/>
            <person name="Van Aken S.E."/>
            <person name="Lovley D.R."/>
            <person name="Fraser C.M."/>
        </authorList>
    </citation>
    <scope>NUCLEOTIDE SEQUENCE [LARGE SCALE GENOMIC DNA]</scope>
    <source>
        <strain>ATCC 51573 / DSM 12127 / PCA</strain>
    </source>
</reference>
<organism>
    <name type="scientific">Geobacter sulfurreducens (strain ATCC 51573 / DSM 12127 / PCA)</name>
    <dbReference type="NCBI Taxonomy" id="243231"/>
    <lineage>
        <taxon>Bacteria</taxon>
        <taxon>Pseudomonadati</taxon>
        <taxon>Thermodesulfobacteriota</taxon>
        <taxon>Desulfuromonadia</taxon>
        <taxon>Geobacterales</taxon>
        <taxon>Geobacteraceae</taxon>
        <taxon>Geobacter</taxon>
    </lineage>
</organism>
<gene>
    <name evidence="1" type="primary">rlmN</name>
    <name type="ordered locus">GSU1111</name>
</gene>